<reference key="1">
    <citation type="submission" date="2006-12" db="EMBL/GenBank/DDBJ databases">
        <authorList>
            <person name="Fouts D.E."/>
            <person name="Nelson K.E."/>
            <person name="Sebastian Y."/>
        </authorList>
    </citation>
    <scope>NUCLEOTIDE SEQUENCE [LARGE SCALE GENOMIC DNA]</scope>
    <source>
        <strain>81-176</strain>
    </source>
</reference>
<accession>A1VZY2</accession>
<feature type="chain" id="PRO_1000065084" description="Ornithine carbamoyltransferase">
    <location>
        <begin position="1"/>
        <end position="306"/>
    </location>
</feature>
<feature type="binding site" evidence="2">
    <location>
        <begin position="46"/>
        <end position="49"/>
    </location>
    <ligand>
        <name>carbamoyl phosphate</name>
        <dbReference type="ChEBI" id="CHEBI:58228"/>
    </ligand>
</feature>
<feature type="binding site" evidence="2">
    <location>
        <position position="73"/>
    </location>
    <ligand>
        <name>carbamoyl phosphate</name>
        <dbReference type="ChEBI" id="CHEBI:58228"/>
    </ligand>
</feature>
<feature type="binding site" evidence="2">
    <location>
        <position position="97"/>
    </location>
    <ligand>
        <name>carbamoyl phosphate</name>
        <dbReference type="ChEBI" id="CHEBI:58228"/>
    </ligand>
</feature>
<feature type="binding site" evidence="2">
    <location>
        <begin position="124"/>
        <end position="127"/>
    </location>
    <ligand>
        <name>carbamoyl phosphate</name>
        <dbReference type="ChEBI" id="CHEBI:58228"/>
    </ligand>
</feature>
<feature type="binding site" evidence="2">
    <location>
        <position position="156"/>
    </location>
    <ligand>
        <name>L-ornithine</name>
        <dbReference type="ChEBI" id="CHEBI:46911"/>
    </ligand>
</feature>
<feature type="binding site" evidence="2">
    <location>
        <position position="220"/>
    </location>
    <ligand>
        <name>L-ornithine</name>
        <dbReference type="ChEBI" id="CHEBI:46911"/>
    </ligand>
</feature>
<feature type="binding site" evidence="2">
    <location>
        <begin position="224"/>
        <end position="225"/>
    </location>
    <ligand>
        <name>L-ornithine</name>
        <dbReference type="ChEBI" id="CHEBI:46911"/>
    </ligand>
</feature>
<feature type="binding site" evidence="2">
    <location>
        <begin position="260"/>
        <end position="261"/>
    </location>
    <ligand>
        <name>carbamoyl phosphate</name>
        <dbReference type="ChEBI" id="CHEBI:58228"/>
    </ligand>
</feature>
<feature type="binding site" evidence="2">
    <location>
        <position position="288"/>
    </location>
    <ligand>
        <name>carbamoyl phosphate</name>
        <dbReference type="ChEBI" id="CHEBI:58228"/>
    </ligand>
</feature>
<evidence type="ECO:0000250" key="1"/>
<evidence type="ECO:0000255" key="2">
    <source>
        <dbReference type="HAMAP-Rule" id="MF_01109"/>
    </source>
</evidence>
<comment type="function">
    <text evidence="1">Reversibly catalyzes the transfer of the carbamoyl group from carbamoyl phosphate (CP) to the N(epsilon) atom of ornithine (ORN) to produce L-citrulline.</text>
</comment>
<comment type="catalytic activity">
    <reaction evidence="2">
        <text>carbamoyl phosphate + L-ornithine = L-citrulline + phosphate + H(+)</text>
        <dbReference type="Rhea" id="RHEA:19513"/>
        <dbReference type="ChEBI" id="CHEBI:15378"/>
        <dbReference type="ChEBI" id="CHEBI:43474"/>
        <dbReference type="ChEBI" id="CHEBI:46911"/>
        <dbReference type="ChEBI" id="CHEBI:57743"/>
        <dbReference type="ChEBI" id="CHEBI:58228"/>
        <dbReference type="EC" id="2.1.3.3"/>
    </reaction>
</comment>
<comment type="pathway">
    <text evidence="2">Amino-acid biosynthesis; L-arginine biosynthesis; L-arginine from L-ornithine and carbamoyl phosphate: step 1/3.</text>
</comment>
<comment type="subcellular location">
    <subcellularLocation>
        <location evidence="2">Cytoplasm</location>
    </subcellularLocation>
</comment>
<comment type="similarity">
    <text evidence="2">Belongs to the aspartate/ornithine carbamoyltransferase superfamily. OTCase family.</text>
</comment>
<keyword id="KW-0028">Amino-acid biosynthesis</keyword>
<keyword id="KW-0055">Arginine biosynthesis</keyword>
<keyword id="KW-0963">Cytoplasm</keyword>
<keyword id="KW-0808">Transferase</keyword>
<organism>
    <name type="scientific">Campylobacter jejuni subsp. jejuni serotype O:23/36 (strain 81-176)</name>
    <dbReference type="NCBI Taxonomy" id="354242"/>
    <lineage>
        <taxon>Bacteria</taxon>
        <taxon>Pseudomonadati</taxon>
        <taxon>Campylobacterota</taxon>
        <taxon>Epsilonproteobacteria</taxon>
        <taxon>Campylobacterales</taxon>
        <taxon>Campylobacteraceae</taxon>
        <taxon>Campylobacter</taxon>
    </lineage>
</organism>
<protein>
    <recommendedName>
        <fullName evidence="2">Ornithine carbamoyltransferase</fullName>
        <shortName evidence="2">OTCase</shortName>
        <ecNumber evidence="2">2.1.3.3</ecNumber>
    </recommendedName>
</protein>
<dbReference type="EC" id="2.1.3.3" evidence="2"/>
<dbReference type="EMBL" id="CP000538">
    <property type="protein sequence ID" value="EAQ72154.1"/>
    <property type="molecule type" value="Genomic_DNA"/>
</dbReference>
<dbReference type="RefSeq" id="WP_002854006.1">
    <property type="nucleotide sequence ID" value="NC_008787.1"/>
</dbReference>
<dbReference type="SMR" id="A1VZY2"/>
<dbReference type="KEGG" id="cjj:CJJ81176_1012"/>
<dbReference type="eggNOG" id="COG0078">
    <property type="taxonomic scope" value="Bacteria"/>
</dbReference>
<dbReference type="HOGENOM" id="CLU_043846_3_2_7"/>
<dbReference type="UniPathway" id="UPA00068">
    <property type="reaction ID" value="UER00112"/>
</dbReference>
<dbReference type="Proteomes" id="UP000000646">
    <property type="component" value="Chromosome"/>
</dbReference>
<dbReference type="GO" id="GO:0005737">
    <property type="term" value="C:cytoplasm"/>
    <property type="evidence" value="ECO:0007669"/>
    <property type="project" value="UniProtKB-SubCell"/>
</dbReference>
<dbReference type="GO" id="GO:0016597">
    <property type="term" value="F:amino acid binding"/>
    <property type="evidence" value="ECO:0007669"/>
    <property type="project" value="InterPro"/>
</dbReference>
<dbReference type="GO" id="GO:0004585">
    <property type="term" value="F:ornithine carbamoyltransferase activity"/>
    <property type="evidence" value="ECO:0007669"/>
    <property type="project" value="UniProtKB-UniRule"/>
</dbReference>
<dbReference type="GO" id="GO:0042450">
    <property type="term" value="P:arginine biosynthetic process via ornithine"/>
    <property type="evidence" value="ECO:0007669"/>
    <property type="project" value="TreeGrafter"/>
</dbReference>
<dbReference type="GO" id="GO:0019240">
    <property type="term" value="P:citrulline biosynthetic process"/>
    <property type="evidence" value="ECO:0007669"/>
    <property type="project" value="TreeGrafter"/>
</dbReference>
<dbReference type="GO" id="GO:0006526">
    <property type="term" value="P:L-arginine biosynthetic process"/>
    <property type="evidence" value="ECO:0007669"/>
    <property type="project" value="UniProtKB-UniRule"/>
</dbReference>
<dbReference type="FunFam" id="3.40.50.1370:FF:000008">
    <property type="entry name" value="Ornithine carbamoyltransferase"/>
    <property type="match status" value="1"/>
</dbReference>
<dbReference type="Gene3D" id="3.40.50.1370">
    <property type="entry name" value="Aspartate/ornithine carbamoyltransferase"/>
    <property type="match status" value="2"/>
</dbReference>
<dbReference type="HAMAP" id="MF_01109">
    <property type="entry name" value="OTCase"/>
    <property type="match status" value="1"/>
</dbReference>
<dbReference type="InterPro" id="IPR006132">
    <property type="entry name" value="Asp/Orn_carbamoyltranf_P-bd"/>
</dbReference>
<dbReference type="InterPro" id="IPR006130">
    <property type="entry name" value="Asp/Orn_carbamoylTrfase"/>
</dbReference>
<dbReference type="InterPro" id="IPR036901">
    <property type="entry name" value="Asp/Orn_carbamoylTrfase_sf"/>
</dbReference>
<dbReference type="InterPro" id="IPR006131">
    <property type="entry name" value="Asp_carbamoyltransf_Asp/Orn-bd"/>
</dbReference>
<dbReference type="InterPro" id="IPR002292">
    <property type="entry name" value="Orn/put_carbamltrans"/>
</dbReference>
<dbReference type="InterPro" id="IPR024904">
    <property type="entry name" value="OTCase_ArgI"/>
</dbReference>
<dbReference type="NCBIfam" id="TIGR00658">
    <property type="entry name" value="orni_carb_tr"/>
    <property type="match status" value="1"/>
</dbReference>
<dbReference type="NCBIfam" id="NF001986">
    <property type="entry name" value="PRK00779.1"/>
    <property type="match status" value="1"/>
</dbReference>
<dbReference type="PANTHER" id="PTHR45753">
    <property type="entry name" value="ORNITHINE CARBAMOYLTRANSFERASE, MITOCHONDRIAL"/>
    <property type="match status" value="1"/>
</dbReference>
<dbReference type="PANTHER" id="PTHR45753:SF3">
    <property type="entry name" value="ORNITHINE TRANSCARBAMYLASE, MITOCHONDRIAL"/>
    <property type="match status" value="1"/>
</dbReference>
<dbReference type="Pfam" id="PF00185">
    <property type="entry name" value="OTCace"/>
    <property type="match status" value="1"/>
</dbReference>
<dbReference type="Pfam" id="PF02729">
    <property type="entry name" value="OTCace_N"/>
    <property type="match status" value="1"/>
</dbReference>
<dbReference type="PRINTS" id="PR00100">
    <property type="entry name" value="AOTCASE"/>
</dbReference>
<dbReference type="PRINTS" id="PR00102">
    <property type="entry name" value="OTCASE"/>
</dbReference>
<dbReference type="SUPFAM" id="SSF53671">
    <property type="entry name" value="Aspartate/ornithine carbamoyltransferase"/>
    <property type="match status" value="1"/>
</dbReference>
<dbReference type="PROSITE" id="PS00097">
    <property type="entry name" value="CARBAMOYLTRANSFERASE"/>
    <property type="match status" value="1"/>
</dbReference>
<proteinExistence type="inferred from homology"/>
<sequence length="306" mass="34932">MKHFLTLRDFSKEEILSLVNHASELKKEPKKLLQDKTLAMIFEKNSTRTRMAFELAITELGGKALFLSSNDLQLSRGEPVKDTARVIGAMVDFVMMRVNKHETLLEFARYSKAPVINALSELYHPTQVLGDLLTIKEWNKMQNGIAKVAFIGDSNNMCNSWLIAAAILGFEFSIAIPKNYKISPEIWEFAMKQALISGAKISLSHDKFEALKDKDVVITDTWVSMGEENEKERKIKEFEGFMIDEKAMSVANKDAILLHCLPAYRGYEVSEEIFEKHADVIFEEARNRLYVVKALLCFLDNQRGRE</sequence>
<gene>
    <name evidence="2" type="primary">argF</name>
    <name type="ordered locus">CJJ81176_1012</name>
</gene>
<name>OTC_CAMJJ</name>